<gene>
    <name evidence="1" type="primary">pqqD</name>
    <name type="ordered locus">KPK_2542</name>
</gene>
<proteinExistence type="inferred from homology"/>
<comment type="function">
    <text evidence="1">Functions as a PqqA binding protein and presents PqqA to PqqE, in the pyrroloquinoline quinone (PQQ) biosynthetic pathway.</text>
</comment>
<comment type="pathway">
    <text evidence="1">Cofactor biosynthesis; pyrroloquinoline quinone biosynthesis.</text>
</comment>
<comment type="subunit">
    <text evidence="1">Monomer. Interacts with PqqE.</text>
</comment>
<comment type="similarity">
    <text evidence="1">Belongs to the PqqD family.</text>
</comment>
<dbReference type="EMBL" id="CP000964">
    <property type="protein sequence ID" value="ACI10478.1"/>
    <property type="molecule type" value="Genomic_DNA"/>
</dbReference>
<dbReference type="SMR" id="B5XX59"/>
<dbReference type="KEGG" id="kpe:KPK_2542"/>
<dbReference type="HOGENOM" id="CLU_163864_2_1_6"/>
<dbReference type="UniPathway" id="UPA00539"/>
<dbReference type="Proteomes" id="UP000001734">
    <property type="component" value="Chromosome"/>
</dbReference>
<dbReference type="GO" id="GO:0048038">
    <property type="term" value="F:quinone binding"/>
    <property type="evidence" value="ECO:0007669"/>
    <property type="project" value="InterPro"/>
</dbReference>
<dbReference type="GO" id="GO:0018189">
    <property type="term" value="P:pyrroloquinoline quinone biosynthetic process"/>
    <property type="evidence" value="ECO:0007669"/>
    <property type="project" value="UniProtKB-UniRule"/>
</dbReference>
<dbReference type="Gene3D" id="1.10.10.1150">
    <property type="entry name" value="Coenzyme PQQ synthesis protein D (PqqD)"/>
    <property type="match status" value="1"/>
</dbReference>
<dbReference type="HAMAP" id="MF_00655">
    <property type="entry name" value="PQQ_syn_PqqD"/>
    <property type="match status" value="1"/>
</dbReference>
<dbReference type="InterPro" id="IPR008792">
    <property type="entry name" value="PQQD"/>
</dbReference>
<dbReference type="InterPro" id="IPR022479">
    <property type="entry name" value="PqqD_bac"/>
</dbReference>
<dbReference type="InterPro" id="IPR041881">
    <property type="entry name" value="PqqD_sf"/>
</dbReference>
<dbReference type="NCBIfam" id="TIGR03859">
    <property type="entry name" value="PQQ_PqqD"/>
    <property type="match status" value="1"/>
</dbReference>
<dbReference type="NCBIfam" id="NF002535">
    <property type="entry name" value="PRK02079.1"/>
    <property type="match status" value="1"/>
</dbReference>
<dbReference type="Pfam" id="PF05402">
    <property type="entry name" value="PqqD"/>
    <property type="match status" value="1"/>
</dbReference>
<reference key="1">
    <citation type="journal article" date="2008" name="PLoS Genet.">
        <title>Complete genome sequence of the N2-fixing broad host range endophyte Klebsiella pneumoniae 342 and virulence predictions verified in mice.</title>
        <authorList>
            <person name="Fouts D.E."/>
            <person name="Tyler H.L."/>
            <person name="DeBoy R.T."/>
            <person name="Daugherty S."/>
            <person name="Ren Q."/>
            <person name="Badger J.H."/>
            <person name="Durkin A.S."/>
            <person name="Huot H."/>
            <person name="Shrivastava S."/>
            <person name="Kothari S."/>
            <person name="Dodson R.J."/>
            <person name="Mohamoud Y."/>
            <person name="Khouri H."/>
            <person name="Roesch L.F.W."/>
            <person name="Krogfelt K.A."/>
            <person name="Struve C."/>
            <person name="Triplett E.W."/>
            <person name="Methe B.A."/>
        </authorList>
    </citation>
    <scope>NUCLEOTIDE SEQUENCE [LARGE SCALE GENOMIC DNA]</scope>
    <source>
        <strain>342</strain>
    </source>
</reference>
<keyword id="KW-0884">PQQ biosynthesis</keyword>
<accession>B5XX59</accession>
<name>PQQD_KLEP3</name>
<feature type="chain" id="PRO_1000131188" description="PqqA binding protein">
    <location>
        <begin position="1"/>
        <end position="92"/>
    </location>
</feature>
<sequence>MQKTSIVAFRRGYRLQWEAAQESHVILYPEGMAKLNETAAAILELVDGRRDVAAIIAMLNERFPEAGGVDDDVVEFLQIACQQKWITCREPE</sequence>
<evidence type="ECO:0000255" key="1">
    <source>
        <dbReference type="HAMAP-Rule" id="MF_00655"/>
    </source>
</evidence>
<organism>
    <name type="scientific">Klebsiella pneumoniae (strain 342)</name>
    <dbReference type="NCBI Taxonomy" id="507522"/>
    <lineage>
        <taxon>Bacteria</taxon>
        <taxon>Pseudomonadati</taxon>
        <taxon>Pseudomonadota</taxon>
        <taxon>Gammaproteobacteria</taxon>
        <taxon>Enterobacterales</taxon>
        <taxon>Enterobacteriaceae</taxon>
        <taxon>Klebsiella/Raoultella group</taxon>
        <taxon>Klebsiella</taxon>
        <taxon>Klebsiella pneumoniae complex</taxon>
    </lineage>
</organism>
<protein>
    <recommendedName>
        <fullName evidence="1">PqqA binding protein</fullName>
    </recommendedName>
    <alternativeName>
        <fullName evidence="1">Coenzyme PQQ synthesis protein D</fullName>
    </alternativeName>
    <alternativeName>
        <fullName evidence="1">Pyrroloquinoline quinone biosynthesis protein D</fullName>
    </alternativeName>
</protein>